<organism>
    <name type="scientific">Tachyglossus aculeatus aculeatus</name>
    <name type="common">Southeast Australian short-beaked echidna</name>
    <dbReference type="NCBI Taxonomy" id="49271"/>
    <lineage>
        <taxon>Eukaryota</taxon>
        <taxon>Metazoa</taxon>
        <taxon>Chordata</taxon>
        <taxon>Craniata</taxon>
        <taxon>Vertebrata</taxon>
        <taxon>Euteleostomi</taxon>
        <taxon>Mammalia</taxon>
        <taxon>Monotremata</taxon>
        <taxon>Tachyglossidae</taxon>
        <taxon>Tachyglossus</taxon>
    </lineage>
</organism>
<accession>P69057</accession>
<accession>P01188</accession>
<accession>P32878</accession>
<proteinExistence type="evidence at protein level"/>
<name>NEU1_TACAC</name>
<keyword id="KW-0027">Amidation</keyword>
<keyword id="KW-0903">Direct protein sequencing</keyword>
<keyword id="KW-1015">Disulfide bond</keyword>
<keyword id="KW-0372">Hormone</keyword>
<keyword id="KW-0964">Secreted</keyword>
<reference key="1">
    <citation type="journal article" date="1973" name="Nature New Biol.">
        <title>Neurohypophysial hormones and evolution of tetrapods.</title>
        <authorList>
            <person name="Acher R."/>
            <person name="Chauvet J."/>
            <person name="Chauvet M.-T."/>
        </authorList>
    </citation>
    <scope>PROTEIN SEQUENCE</scope>
</reference>
<dbReference type="PIR" id="A93408">
    <property type="entry name" value="A93408"/>
</dbReference>
<dbReference type="SMR" id="P69057"/>
<dbReference type="GO" id="GO:0005576">
    <property type="term" value="C:extracellular region"/>
    <property type="evidence" value="ECO:0007669"/>
    <property type="project" value="UniProtKB-SubCell"/>
</dbReference>
<dbReference type="GO" id="GO:0005185">
    <property type="term" value="F:neurohypophyseal hormone activity"/>
    <property type="evidence" value="ECO:0007669"/>
    <property type="project" value="InterPro"/>
</dbReference>
<dbReference type="InterPro" id="IPR022423">
    <property type="entry name" value="Neurohypophysial_hormone_CS"/>
</dbReference>
<dbReference type="Pfam" id="PF00220">
    <property type="entry name" value="Hormone_4"/>
    <property type="match status" value="1"/>
</dbReference>
<dbReference type="PROSITE" id="PS00264">
    <property type="entry name" value="NEUROHYPOPHYS_HORM"/>
    <property type="match status" value="1"/>
</dbReference>
<protein>
    <recommendedName>
        <fullName>Oxytocin</fullName>
    </recommendedName>
    <alternativeName>
        <fullName>Ocytocin</fullName>
    </alternativeName>
</protein>
<evidence type="ECO:0000250" key="1"/>
<evidence type="ECO:0000250" key="2">
    <source>
        <dbReference type="UniProtKB" id="P01175"/>
    </source>
</evidence>
<evidence type="ECO:0000250" key="3">
    <source>
        <dbReference type="UniProtKB" id="P01178"/>
    </source>
</evidence>
<evidence type="ECO:0000305" key="4"/>
<comment type="function">
    <text evidence="3">Oxytocin causes contraction of the smooth muscle of the uterus and of the mammary gland. Acts by binding to oxytocin receptor (OXTR) (By similarity).</text>
</comment>
<comment type="subunit">
    <text evidence="3">Interacts with oxytocin receptor (Ki=1.5 nM) (By similarity). Interacts with vasopressin V1aR/AVPR1A (Ki=37 nM), V1bR/AVPR1B (Ki=222 nM), and V2R/AVPR2 receptors (Ki=823 nM) (By similarity).</text>
</comment>
<comment type="subcellular location">
    <subcellularLocation>
        <location>Secreted</location>
    </subcellularLocation>
</comment>
<comment type="similarity">
    <text evidence="4">Belongs to the vasopressin/oxytocin family.</text>
</comment>
<sequence>CYIQNCPLG</sequence>
<feature type="peptide" id="PRO_0000044085" description="Oxytocin">
    <location>
        <begin position="1"/>
        <end position="9"/>
    </location>
</feature>
<feature type="modified residue" description="Glycine amide" evidence="1">
    <location>
        <position position="9"/>
    </location>
</feature>
<feature type="disulfide bond" evidence="2">
    <location>
        <begin position="1"/>
        <end position="6"/>
    </location>
</feature>
<gene>
    <name type="primary">OXT</name>
</gene>